<sequence>MIETDRIISANTAQTNDENVIDRAIRPKTLAEYEGQPAVREQMEIFIQAAKARKDALDHTLIFGPPGLGKTTLSNIIANEMGVELKQTSGPVLEKAGDLAALLTNLEENDVLFIDEIHRLSPVVEEILYPAMEDYQLDIMIGEGPAARSIKIDLPPFTLVGATTRAGLLTSPLRDRFGIIQRLEFYSIDDLSKIVYRSAKLLNLDITTDGAMEIAKRSRGTPRIANRLLRRVRDYAQVKGSGVICFEIADKALSMLKVDPVGFDHMDHRYLLTLMEKFAGGPVGLDTMSAALSEEKGTIEDVIEPYLIQQGYIMRTARGRIATLLAYNHFKLKIPDNLSADQQQTLSI</sequence>
<reference key="1">
    <citation type="journal article" date="2007" name="PLoS ONE">
        <title>Complete genomic characterization of a pathogenic A.II strain of Francisella tularensis subspecies tularensis.</title>
        <authorList>
            <person name="Beckstrom-Sternberg S.M."/>
            <person name="Auerbach R.K."/>
            <person name="Godbole S."/>
            <person name="Pearson J.V."/>
            <person name="Beckstrom-Sternberg J.S."/>
            <person name="Deng Z."/>
            <person name="Munk C."/>
            <person name="Kubota K."/>
            <person name="Zhou Y."/>
            <person name="Bruce D."/>
            <person name="Noronha J."/>
            <person name="Scheuermann R.H."/>
            <person name="Wang A."/>
            <person name="Wei X."/>
            <person name="Wang J."/>
            <person name="Hao J."/>
            <person name="Wagner D.M."/>
            <person name="Brettin T.S."/>
            <person name="Brown N."/>
            <person name="Gilna P."/>
            <person name="Keim P.S."/>
        </authorList>
    </citation>
    <scope>NUCLEOTIDE SEQUENCE [LARGE SCALE GENOMIC DNA]</scope>
    <source>
        <strain>WY96-3418</strain>
    </source>
</reference>
<organism>
    <name type="scientific">Francisella tularensis subsp. tularensis (strain WY96-3418)</name>
    <dbReference type="NCBI Taxonomy" id="418136"/>
    <lineage>
        <taxon>Bacteria</taxon>
        <taxon>Pseudomonadati</taxon>
        <taxon>Pseudomonadota</taxon>
        <taxon>Gammaproteobacteria</taxon>
        <taxon>Thiotrichales</taxon>
        <taxon>Francisellaceae</taxon>
        <taxon>Francisella</taxon>
    </lineage>
</organism>
<evidence type="ECO:0000255" key="1">
    <source>
        <dbReference type="HAMAP-Rule" id="MF_00016"/>
    </source>
</evidence>
<name>RUVB_FRATW</name>
<gene>
    <name evidence="1" type="primary">ruvB</name>
    <name type="ordered locus">FTW_0920</name>
</gene>
<feature type="chain" id="PRO_1000001411" description="Holliday junction branch migration complex subunit RuvB">
    <location>
        <begin position="1"/>
        <end position="348"/>
    </location>
</feature>
<feature type="region of interest" description="Large ATPase domain (RuvB-L)" evidence="1">
    <location>
        <begin position="4"/>
        <end position="186"/>
    </location>
</feature>
<feature type="region of interest" description="Small ATPAse domain (RuvB-S)" evidence="1">
    <location>
        <begin position="187"/>
        <end position="257"/>
    </location>
</feature>
<feature type="region of interest" description="Head domain (RuvB-H)" evidence="1">
    <location>
        <begin position="260"/>
        <end position="348"/>
    </location>
</feature>
<feature type="binding site" evidence="1">
    <location>
        <position position="25"/>
    </location>
    <ligand>
        <name>ATP</name>
        <dbReference type="ChEBI" id="CHEBI:30616"/>
    </ligand>
</feature>
<feature type="binding site" evidence="1">
    <location>
        <position position="26"/>
    </location>
    <ligand>
        <name>ATP</name>
        <dbReference type="ChEBI" id="CHEBI:30616"/>
    </ligand>
</feature>
<feature type="binding site" evidence="1">
    <location>
        <position position="67"/>
    </location>
    <ligand>
        <name>ATP</name>
        <dbReference type="ChEBI" id="CHEBI:30616"/>
    </ligand>
</feature>
<feature type="binding site" evidence="1">
    <location>
        <position position="70"/>
    </location>
    <ligand>
        <name>ATP</name>
        <dbReference type="ChEBI" id="CHEBI:30616"/>
    </ligand>
</feature>
<feature type="binding site" evidence="1">
    <location>
        <position position="71"/>
    </location>
    <ligand>
        <name>ATP</name>
        <dbReference type="ChEBI" id="CHEBI:30616"/>
    </ligand>
</feature>
<feature type="binding site" evidence="1">
    <location>
        <position position="71"/>
    </location>
    <ligand>
        <name>Mg(2+)</name>
        <dbReference type="ChEBI" id="CHEBI:18420"/>
    </ligand>
</feature>
<feature type="binding site" evidence="1">
    <location>
        <position position="72"/>
    </location>
    <ligand>
        <name>ATP</name>
        <dbReference type="ChEBI" id="CHEBI:30616"/>
    </ligand>
</feature>
<feature type="binding site" evidence="1">
    <location>
        <begin position="133"/>
        <end position="135"/>
    </location>
    <ligand>
        <name>ATP</name>
        <dbReference type="ChEBI" id="CHEBI:30616"/>
    </ligand>
</feature>
<feature type="binding site" evidence="1">
    <location>
        <position position="176"/>
    </location>
    <ligand>
        <name>ATP</name>
        <dbReference type="ChEBI" id="CHEBI:30616"/>
    </ligand>
</feature>
<feature type="binding site" evidence="1">
    <location>
        <position position="186"/>
    </location>
    <ligand>
        <name>ATP</name>
        <dbReference type="ChEBI" id="CHEBI:30616"/>
    </ligand>
</feature>
<feature type="binding site" evidence="1">
    <location>
        <position position="223"/>
    </location>
    <ligand>
        <name>ATP</name>
        <dbReference type="ChEBI" id="CHEBI:30616"/>
    </ligand>
</feature>
<feature type="binding site" evidence="1">
    <location>
        <position position="315"/>
    </location>
    <ligand>
        <name>DNA</name>
        <dbReference type="ChEBI" id="CHEBI:16991"/>
    </ligand>
</feature>
<feature type="binding site" evidence="1">
    <location>
        <position position="320"/>
    </location>
    <ligand>
        <name>DNA</name>
        <dbReference type="ChEBI" id="CHEBI:16991"/>
    </ligand>
</feature>
<keyword id="KW-0067">ATP-binding</keyword>
<keyword id="KW-0963">Cytoplasm</keyword>
<keyword id="KW-0227">DNA damage</keyword>
<keyword id="KW-0233">DNA recombination</keyword>
<keyword id="KW-0234">DNA repair</keyword>
<keyword id="KW-0238">DNA-binding</keyword>
<keyword id="KW-0378">Hydrolase</keyword>
<keyword id="KW-0547">Nucleotide-binding</keyword>
<comment type="function">
    <text evidence="1">The RuvA-RuvB-RuvC complex processes Holliday junction (HJ) DNA during genetic recombination and DNA repair, while the RuvA-RuvB complex plays an important role in the rescue of blocked DNA replication forks via replication fork reversal (RFR). RuvA specifically binds to HJ cruciform DNA, conferring on it an open structure. The RuvB hexamer acts as an ATP-dependent pump, pulling dsDNA into and through the RuvAB complex. RuvB forms 2 homohexamers on either side of HJ DNA bound by 1 or 2 RuvA tetramers; 4 subunits per hexamer contact DNA at a time. Coordinated motions by a converter formed by DNA-disengaged RuvB subunits stimulates ATP hydrolysis and nucleotide exchange. Immobilization of the converter enables RuvB to convert the ATP-contained energy into a lever motion, pulling 2 nucleotides of DNA out of the RuvA tetramer per ATP hydrolyzed, thus driving DNA branch migration. The RuvB motors rotate together with the DNA substrate, which together with the progressing nucleotide cycle form the mechanistic basis for DNA recombination by continuous HJ branch migration. Branch migration allows RuvC to scan DNA until it finds its consensus sequence, where it cleaves and resolves cruciform DNA.</text>
</comment>
<comment type="catalytic activity">
    <reaction evidence="1">
        <text>ATP + H2O = ADP + phosphate + H(+)</text>
        <dbReference type="Rhea" id="RHEA:13065"/>
        <dbReference type="ChEBI" id="CHEBI:15377"/>
        <dbReference type="ChEBI" id="CHEBI:15378"/>
        <dbReference type="ChEBI" id="CHEBI:30616"/>
        <dbReference type="ChEBI" id="CHEBI:43474"/>
        <dbReference type="ChEBI" id="CHEBI:456216"/>
    </reaction>
</comment>
<comment type="subunit">
    <text evidence="1">Homohexamer. Forms an RuvA(8)-RuvB(12)-Holliday junction (HJ) complex. HJ DNA is sandwiched between 2 RuvA tetramers; dsDNA enters through RuvA and exits via RuvB. An RuvB hexamer assembles on each DNA strand where it exits the tetramer. Each RuvB hexamer is contacted by two RuvA subunits (via domain III) on 2 adjacent RuvB subunits; this complex drives branch migration. In the full resolvosome a probable DNA-RuvA(4)-RuvB(12)-RuvC(2) complex forms which resolves the HJ.</text>
</comment>
<comment type="subcellular location">
    <subcellularLocation>
        <location evidence="1">Cytoplasm</location>
    </subcellularLocation>
</comment>
<comment type="domain">
    <text evidence="1">Has 3 domains, the large (RuvB-L) and small ATPase (RuvB-S) domains and the C-terminal head (RuvB-H) domain. The head domain binds DNA, while the ATPase domains jointly bind ATP, ADP or are empty depending on the state of the subunit in the translocation cycle. During a single DNA translocation step the structure of each domain remains the same, but their relative positions change.</text>
</comment>
<comment type="similarity">
    <text evidence="1">Belongs to the RuvB family.</text>
</comment>
<proteinExistence type="inferred from homology"/>
<dbReference type="EC" id="3.6.4.-" evidence="1"/>
<dbReference type="EMBL" id="CP000608">
    <property type="protein sequence ID" value="ABO46761.1"/>
    <property type="molecule type" value="Genomic_DNA"/>
</dbReference>
<dbReference type="RefSeq" id="WP_003016007.1">
    <property type="nucleotide sequence ID" value="NC_009257.1"/>
</dbReference>
<dbReference type="SMR" id="A4IXW0"/>
<dbReference type="KEGG" id="ftw:FTW_0920"/>
<dbReference type="HOGENOM" id="CLU_055599_1_0_6"/>
<dbReference type="GO" id="GO:0005737">
    <property type="term" value="C:cytoplasm"/>
    <property type="evidence" value="ECO:0007669"/>
    <property type="project" value="UniProtKB-SubCell"/>
</dbReference>
<dbReference type="GO" id="GO:0048476">
    <property type="term" value="C:Holliday junction resolvase complex"/>
    <property type="evidence" value="ECO:0007669"/>
    <property type="project" value="UniProtKB-UniRule"/>
</dbReference>
<dbReference type="GO" id="GO:0005524">
    <property type="term" value="F:ATP binding"/>
    <property type="evidence" value="ECO:0007669"/>
    <property type="project" value="UniProtKB-UniRule"/>
</dbReference>
<dbReference type="GO" id="GO:0016887">
    <property type="term" value="F:ATP hydrolysis activity"/>
    <property type="evidence" value="ECO:0007669"/>
    <property type="project" value="InterPro"/>
</dbReference>
<dbReference type="GO" id="GO:0000400">
    <property type="term" value="F:four-way junction DNA binding"/>
    <property type="evidence" value="ECO:0007669"/>
    <property type="project" value="UniProtKB-UniRule"/>
</dbReference>
<dbReference type="GO" id="GO:0009378">
    <property type="term" value="F:four-way junction helicase activity"/>
    <property type="evidence" value="ECO:0007669"/>
    <property type="project" value="InterPro"/>
</dbReference>
<dbReference type="GO" id="GO:0006310">
    <property type="term" value="P:DNA recombination"/>
    <property type="evidence" value="ECO:0007669"/>
    <property type="project" value="UniProtKB-UniRule"/>
</dbReference>
<dbReference type="GO" id="GO:0006281">
    <property type="term" value="P:DNA repair"/>
    <property type="evidence" value="ECO:0007669"/>
    <property type="project" value="UniProtKB-UniRule"/>
</dbReference>
<dbReference type="CDD" id="cd00009">
    <property type="entry name" value="AAA"/>
    <property type="match status" value="1"/>
</dbReference>
<dbReference type="FunFam" id="1.10.8.60:FF:000023">
    <property type="entry name" value="Holliday junction ATP-dependent DNA helicase RuvB"/>
    <property type="match status" value="1"/>
</dbReference>
<dbReference type="FunFam" id="3.40.50.300:FF:000073">
    <property type="entry name" value="Holliday junction ATP-dependent DNA helicase RuvB"/>
    <property type="match status" value="1"/>
</dbReference>
<dbReference type="Gene3D" id="1.10.8.60">
    <property type="match status" value="1"/>
</dbReference>
<dbReference type="Gene3D" id="3.40.50.300">
    <property type="entry name" value="P-loop containing nucleotide triphosphate hydrolases"/>
    <property type="match status" value="1"/>
</dbReference>
<dbReference type="Gene3D" id="1.10.10.10">
    <property type="entry name" value="Winged helix-like DNA-binding domain superfamily/Winged helix DNA-binding domain"/>
    <property type="match status" value="1"/>
</dbReference>
<dbReference type="HAMAP" id="MF_00016">
    <property type="entry name" value="DNA_HJ_migration_RuvB"/>
    <property type="match status" value="1"/>
</dbReference>
<dbReference type="InterPro" id="IPR003593">
    <property type="entry name" value="AAA+_ATPase"/>
</dbReference>
<dbReference type="InterPro" id="IPR041445">
    <property type="entry name" value="AAA_lid_4"/>
</dbReference>
<dbReference type="InterPro" id="IPR004605">
    <property type="entry name" value="DNA_helicase_Holl-junc_RuvB"/>
</dbReference>
<dbReference type="InterPro" id="IPR027417">
    <property type="entry name" value="P-loop_NTPase"/>
</dbReference>
<dbReference type="InterPro" id="IPR008824">
    <property type="entry name" value="RuvB-like_N"/>
</dbReference>
<dbReference type="InterPro" id="IPR008823">
    <property type="entry name" value="RuvB_C"/>
</dbReference>
<dbReference type="InterPro" id="IPR036388">
    <property type="entry name" value="WH-like_DNA-bd_sf"/>
</dbReference>
<dbReference type="InterPro" id="IPR036390">
    <property type="entry name" value="WH_DNA-bd_sf"/>
</dbReference>
<dbReference type="NCBIfam" id="NF000868">
    <property type="entry name" value="PRK00080.1"/>
    <property type="match status" value="1"/>
</dbReference>
<dbReference type="NCBIfam" id="TIGR00635">
    <property type="entry name" value="ruvB"/>
    <property type="match status" value="1"/>
</dbReference>
<dbReference type="PANTHER" id="PTHR42848">
    <property type="match status" value="1"/>
</dbReference>
<dbReference type="PANTHER" id="PTHR42848:SF1">
    <property type="entry name" value="HOLLIDAY JUNCTION BRANCH MIGRATION COMPLEX SUBUNIT RUVB"/>
    <property type="match status" value="1"/>
</dbReference>
<dbReference type="Pfam" id="PF17864">
    <property type="entry name" value="AAA_lid_4"/>
    <property type="match status" value="1"/>
</dbReference>
<dbReference type="Pfam" id="PF05491">
    <property type="entry name" value="RuvB_C"/>
    <property type="match status" value="1"/>
</dbReference>
<dbReference type="Pfam" id="PF05496">
    <property type="entry name" value="RuvB_N"/>
    <property type="match status" value="1"/>
</dbReference>
<dbReference type="SMART" id="SM00382">
    <property type="entry name" value="AAA"/>
    <property type="match status" value="1"/>
</dbReference>
<dbReference type="SUPFAM" id="SSF52540">
    <property type="entry name" value="P-loop containing nucleoside triphosphate hydrolases"/>
    <property type="match status" value="1"/>
</dbReference>
<dbReference type="SUPFAM" id="SSF46785">
    <property type="entry name" value="Winged helix' DNA-binding domain"/>
    <property type="match status" value="1"/>
</dbReference>
<accession>A4IXW0</accession>
<protein>
    <recommendedName>
        <fullName evidence="1">Holliday junction branch migration complex subunit RuvB</fullName>
        <ecNumber evidence="1">3.6.4.-</ecNumber>
    </recommendedName>
</protein>